<name>ATPL_SALSV</name>
<accession>B4TN36</accession>
<organism>
    <name type="scientific">Salmonella schwarzengrund (strain CVM19633)</name>
    <dbReference type="NCBI Taxonomy" id="439843"/>
    <lineage>
        <taxon>Bacteria</taxon>
        <taxon>Pseudomonadati</taxon>
        <taxon>Pseudomonadota</taxon>
        <taxon>Gammaproteobacteria</taxon>
        <taxon>Enterobacterales</taxon>
        <taxon>Enterobacteriaceae</taxon>
        <taxon>Salmonella</taxon>
    </lineage>
</organism>
<protein>
    <recommendedName>
        <fullName evidence="1">ATP synthase subunit c</fullName>
    </recommendedName>
    <alternativeName>
        <fullName evidence="1">ATP synthase F(0) sector subunit c</fullName>
    </alternativeName>
    <alternativeName>
        <fullName evidence="1">F-type ATPase subunit c</fullName>
        <shortName evidence="1">F-ATPase subunit c</shortName>
    </alternativeName>
    <alternativeName>
        <fullName evidence="1">Lipid-binding protein</fullName>
    </alternativeName>
</protein>
<dbReference type="EMBL" id="CP001127">
    <property type="protein sequence ID" value="ACF91223.1"/>
    <property type="molecule type" value="Genomic_DNA"/>
</dbReference>
<dbReference type="RefSeq" id="WP_000429386.1">
    <property type="nucleotide sequence ID" value="NC_011094.1"/>
</dbReference>
<dbReference type="SMR" id="B4TN36"/>
<dbReference type="GeneID" id="98390858"/>
<dbReference type="KEGG" id="sew:SeSA_A4080"/>
<dbReference type="HOGENOM" id="CLU_148047_1_0_6"/>
<dbReference type="Proteomes" id="UP000001865">
    <property type="component" value="Chromosome"/>
</dbReference>
<dbReference type="GO" id="GO:0005886">
    <property type="term" value="C:plasma membrane"/>
    <property type="evidence" value="ECO:0007669"/>
    <property type="project" value="UniProtKB-SubCell"/>
</dbReference>
<dbReference type="GO" id="GO:0045259">
    <property type="term" value="C:proton-transporting ATP synthase complex"/>
    <property type="evidence" value="ECO:0007669"/>
    <property type="project" value="UniProtKB-KW"/>
</dbReference>
<dbReference type="GO" id="GO:0033177">
    <property type="term" value="C:proton-transporting two-sector ATPase complex, proton-transporting domain"/>
    <property type="evidence" value="ECO:0007669"/>
    <property type="project" value="InterPro"/>
</dbReference>
<dbReference type="GO" id="GO:0008289">
    <property type="term" value="F:lipid binding"/>
    <property type="evidence" value="ECO:0007669"/>
    <property type="project" value="UniProtKB-KW"/>
</dbReference>
<dbReference type="GO" id="GO:0046933">
    <property type="term" value="F:proton-transporting ATP synthase activity, rotational mechanism"/>
    <property type="evidence" value="ECO:0007669"/>
    <property type="project" value="UniProtKB-UniRule"/>
</dbReference>
<dbReference type="CDD" id="cd18185">
    <property type="entry name" value="ATP-synt_Fo_c_ATPE"/>
    <property type="match status" value="1"/>
</dbReference>
<dbReference type="FunFam" id="1.20.20.10:FF:000002">
    <property type="entry name" value="ATP synthase subunit c"/>
    <property type="match status" value="1"/>
</dbReference>
<dbReference type="Gene3D" id="1.20.20.10">
    <property type="entry name" value="F1F0 ATP synthase subunit C"/>
    <property type="match status" value="1"/>
</dbReference>
<dbReference type="HAMAP" id="MF_01396">
    <property type="entry name" value="ATP_synth_c_bact"/>
    <property type="match status" value="1"/>
</dbReference>
<dbReference type="InterPro" id="IPR005953">
    <property type="entry name" value="ATP_synth_csu_bac/chlpt"/>
</dbReference>
<dbReference type="InterPro" id="IPR000454">
    <property type="entry name" value="ATP_synth_F0_csu"/>
</dbReference>
<dbReference type="InterPro" id="IPR020537">
    <property type="entry name" value="ATP_synth_F0_csu_DDCD_BS"/>
</dbReference>
<dbReference type="InterPro" id="IPR038662">
    <property type="entry name" value="ATP_synth_F0_csu_sf"/>
</dbReference>
<dbReference type="InterPro" id="IPR002379">
    <property type="entry name" value="ATPase_proteolipid_c-like_dom"/>
</dbReference>
<dbReference type="InterPro" id="IPR035921">
    <property type="entry name" value="F/V-ATP_Csub_sf"/>
</dbReference>
<dbReference type="NCBIfam" id="TIGR01260">
    <property type="entry name" value="ATP_synt_c"/>
    <property type="match status" value="1"/>
</dbReference>
<dbReference type="NCBIfam" id="NF005363">
    <property type="entry name" value="PRK06876.1"/>
    <property type="match status" value="1"/>
</dbReference>
<dbReference type="Pfam" id="PF00137">
    <property type="entry name" value="ATP-synt_C"/>
    <property type="match status" value="1"/>
</dbReference>
<dbReference type="PRINTS" id="PR00124">
    <property type="entry name" value="ATPASEC"/>
</dbReference>
<dbReference type="SUPFAM" id="SSF81333">
    <property type="entry name" value="F1F0 ATP synthase subunit C"/>
    <property type="match status" value="1"/>
</dbReference>
<dbReference type="PROSITE" id="PS00605">
    <property type="entry name" value="ATPASE_C"/>
    <property type="match status" value="1"/>
</dbReference>
<evidence type="ECO:0000255" key="1">
    <source>
        <dbReference type="HAMAP-Rule" id="MF_01396"/>
    </source>
</evidence>
<reference key="1">
    <citation type="journal article" date="2011" name="J. Bacteriol.">
        <title>Comparative genomics of 28 Salmonella enterica isolates: evidence for CRISPR-mediated adaptive sublineage evolution.</title>
        <authorList>
            <person name="Fricke W.F."/>
            <person name="Mammel M.K."/>
            <person name="McDermott P.F."/>
            <person name="Tartera C."/>
            <person name="White D.G."/>
            <person name="Leclerc J.E."/>
            <person name="Ravel J."/>
            <person name="Cebula T.A."/>
        </authorList>
    </citation>
    <scope>NUCLEOTIDE SEQUENCE [LARGE SCALE GENOMIC DNA]</scope>
    <source>
        <strain>CVM19633</strain>
    </source>
</reference>
<comment type="function">
    <text evidence="1">F(1)F(0) ATP synthase produces ATP from ADP in the presence of a proton or sodium gradient. F-type ATPases consist of two structural domains, F(1) containing the extramembraneous catalytic core and F(0) containing the membrane proton channel, linked together by a central stalk and a peripheral stalk. During catalysis, ATP synthesis in the catalytic domain of F(1) is coupled via a rotary mechanism of the central stalk subunits to proton translocation.</text>
</comment>
<comment type="function">
    <text evidence="1">Key component of the F(0) channel; it plays a direct role in translocation across the membrane. A homomeric c-ring of between 10-14 subunits forms the central stalk rotor element with the F(1) delta and epsilon subunits.</text>
</comment>
<comment type="subunit">
    <text evidence="1">F-type ATPases have 2 components, F(1) - the catalytic core - and F(0) - the membrane proton channel. F(1) has five subunits: alpha(3), beta(3), gamma(1), delta(1), epsilon(1). F(0) has three main subunits: a(1), b(2) and c(10-14). The alpha and beta chains form an alternating ring which encloses part of the gamma chain. F(1) is attached to F(0) by a central stalk formed by the gamma and epsilon chains, while a peripheral stalk is formed by the delta and b chains.</text>
</comment>
<comment type="subcellular location">
    <subcellularLocation>
        <location evidence="1">Cell inner membrane</location>
        <topology evidence="1">Multi-pass membrane protein</topology>
    </subcellularLocation>
</comment>
<comment type="similarity">
    <text evidence="1">Belongs to the ATPase C chain family.</text>
</comment>
<sequence>MENLNMDLLYMAAAVMMGLAAIGAAIGIGILGGKFLEGAARQPDLIPLLRTQFFIVMGLVDAIPMIAVGLGLYVMFAVA</sequence>
<feature type="chain" id="PRO_1000184465" description="ATP synthase subunit c">
    <location>
        <begin position="1"/>
        <end position="79"/>
    </location>
</feature>
<feature type="transmembrane region" description="Helical" evidence="1">
    <location>
        <begin position="11"/>
        <end position="31"/>
    </location>
</feature>
<feature type="transmembrane region" description="Helical" evidence="1">
    <location>
        <begin position="53"/>
        <end position="73"/>
    </location>
</feature>
<feature type="site" description="Reversibly protonated during proton transport" evidence="1">
    <location>
        <position position="61"/>
    </location>
</feature>
<keyword id="KW-0066">ATP synthesis</keyword>
<keyword id="KW-0997">Cell inner membrane</keyword>
<keyword id="KW-1003">Cell membrane</keyword>
<keyword id="KW-0138">CF(0)</keyword>
<keyword id="KW-0375">Hydrogen ion transport</keyword>
<keyword id="KW-0406">Ion transport</keyword>
<keyword id="KW-0446">Lipid-binding</keyword>
<keyword id="KW-0472">Membrane</keyword>
<keyword id="KW-0812">Transmembrane</keyword>
<keyword id="KW-1133">Transmembrane helix</keyword>
<keyword id="KW-0813">Transport</keyword>
<gene>
    <name evidence="1" type="primary">atpE</name>
    <name type="ordered locus">SeSA_A4080</name>
</gene>
<proteinExistence type="inferred from homology"/>